<reference evidence="7" key="1">
    <citation type="journal article" date="2013" name="G3 (Bethesda)">
        <title>Large scale full-length cDNA sequencing reveals a unique genomic landscape in a lepidopteran model insect, Bombyx mori.</title>
        <authorList>
            <person name="Suetsugu Y."/>
            <person name="Futahashi R."/>
            <person name="Kanamori H."/>
            <person name="Kadono-Okuda K."/>
            <person name="Sasanuma S."/>
            <person name="Narukawa J."/>
            <person name="Ajimura M."/>
            <person name="Jouraku A."/>
            <person name="Namiki N."/>
            <person name="Shimomura M."/>
            <person name="Sezutsu H."/>
            <person name="Osanai-Futahashi M."/>
            <person name="Suzuki M.G."/>
            <person name="Daimon T."/>
            <person name="Shinoda T."/>
            <person name="Taniai K."/>
            <person name="Asaoka K."/>
            <person name="Niwa R."/>
            <person name="Kawaoka S."/>
            <person name="Katsuma S."/>
            <person name="Tamura T."/>
            <person name="Noda H."/>
            <person name="Kasahara M."/>
            <person name="Sugano S."/>
            <person name="Suzuki Y."/>
            <person name="Fujiwara H."/>
            <person name="Kataoka H."/>
            <person name="Arunkumar K.P."/>
            <person name="Tomar A."/>
            <person name="Nagaraju J."/>
            <person name="Goldsmith M.R."/>
            <person name="Feng Q."/>
            <person name="Xia Q."/>
            <person name="Yamamoto K."/>
            <person name="Shimada T."/>
            <person name="Mita K."/>
        </authorList>
    </citation>
    <scope>NUCLEOTIDE SEQUENCE [MRNA]</scope>
    <source>
        <tissue evidence="7">Midgut</tissue>
    </source>
</reference>
<reference evidence="9" key="2">
    <citation type="journal article" date="2004" name="Science">
        <title>A draft sequence for the genome of the domesticated silkworm (Bombyx mori).</title>
        <authorList>
            <person name="Xia Q."/>
            <person name="Zhou Z."/>
            <person name="Lu C."/>
            <person name="Cheng D."/>
            <person name="Dai F."/>
            <person name="Li B."/>
            <person name="Zhao P."/>
            <person name="Zha X."/>
            <person name="Cheng T."/>
            <person name="Chai C."/>
            <person name="Pan G."/>
            <person name="Xu J."/>
            <person name="Liu C."/>
            <person name="Lin Y."/>
            <person name="Qian J."/>
            <person name="Hou Y."/>
            <person name="Wu Z."/>
            <person name="Li G."/>
            <person name="Pan M."/>
            <person name="Li C."/>
            <person name="Shen Y."/>
            <person name="Lan X."/>
            <person name="Yuan L."/>
            <person name="Li T."/>
            <person name="Xu H."/>
            <person name="Yang G."/>
            <person name="Wan Y."/>
            <person name="Zhu Y."/>
            <person name="Yu M."/>
            <person name="Shen W."/>
            <person name="Wu D."/>
            <person name="Xiang Z."/>
            <person name="Yu J."/>
            <person name="Wang J."/>
            <person name="Li R."/>
            <person name="Shi J."/>
            <person name="Li H."/>
            <person name="Li G."/>
            <person name="Su J."/>
            <person name="Wang X."/>
            <person name="Li G."/>
            <person name="Zhang Z."/>
            <person name="Wu Q."/>
            <person name="Li J."/>
            <person name="Zhang Q."/>
            <person name="Wei N."/>
            <person name="Xu J."/>
            <person name="Sun H."/>
            <person name="Dong L."/>
            <person name="Liu D."/>
            <person name="Zhao S."/>
            <person name="Zhao X."/>
            <person name="Meng Q."/>
            <person name="Lan F."/>
            <person name="Huang X."/>
            <person name="Li Y."/>
            <person name="Fang L."/>
            <person name="Li C."/>
            <person name="Li D."/>
            <person name="Sun Y."/>
            <person name="Zhang Z."/>
            <person name="Yang Z."/>
            <person name="Huang Y."/>
            <person name="Xi Y."/>
            <person name="Qi Q."/>
            <person name="He D."/>
            <person name="Huang H."/>
            <person name="Zhang X."/>
            <person name="Wang Z."/>
            <person name="Li W."/>
            <person name="Cao Y."/>
            <person name="Yu Y."/>
            <person name="Yu H."/>
            <person name="Li J."/>
            <person name="Ye J."/>
            <person name="Chen H."/>
            <person name="Zhou Y."/>
            <person name="Liu B."/>
            <person name="Wang J."/>
            <person name="Ye J."/>
            <person name="Ji H."/>
            <person name="Li S."/>
            <person name="Ni P."/>
            <person name="Zhang J."/>
            <person name="Zhang Y."/>
            <person name="Zheng H."/>
            <person name="Mao B."/>
            <person name="Wang W."/>
            <person name="Ye C."/>
            <person name="Li S."/>
            <person name="Wang J."/>
            <person name="Wong G.K.-S."/>
            <person name="Yang H."/>
        </authorList>
    </citation>
    <scope>NUCLEOTIDE SEQUENCE [LARGE SCALE GENOMIC DNA]</scope>
    <source>
        <strain evidence="9">p50T</strain>
    </source>
</reference>
<reference evidence="8" key="3">
    <citation type="submission" date="2015-02" db="EMBL/GenBank/DDBJ databases">
        <authorList>
            <person name="Zhou Y."/>
            <person name="Gu Z."/>
        </authorList>
    </citation>
    <scope>NUCLEOTIDE SEQUENCE [MRNA] OF 70-381</scope>
    <source>
        <tissue evidence="8">Midgut</tissue>
    </source>
</reference>
<reference evidence="5" key="4">
    <citation type="journal article" date="2019" name="Int. J. Mol. Sci.">
        <title>Genome-Wide Analysis and Hormone Regulation of Chitin Deacetylases in Silkworm.</title>
        <authorList>
            <person name="Zhang Z."/>
            <person name="Yan J."/>
            <person name="Liu Q."/>
            <person name="Zhang Y."/>
            <person name="Gong J."/>
            <person name="Hou Y."/>
        </authorList>
    </citation>
    <scope>TISSUE SPECIFICITY</scope>
    <scope>DEVELOPMENTAL STAGE</scope>
    <scope>INDUCTION</scope>
</reference>
<reference evidence="10" key="5">
    <citation type="journal article" date="2019" name="J. Biol. Chem.">
        <title>Structural and biochemical insights into the catalytic mechanisms of two insect chitin deacetylases of the carbohydrate esterase 4 family.</title>
        <authorList>
            <person name="Liu L."/>
            <person name="Zhou Y."/>
            <person name="Qu M."/>
            <person name="Qiu Y."/>
            <person name="Guo X."/>
            <person name="Zhang Y."/>
            <person name="Liu T."/>
            <person name="Yang J."/>
            <person name="Yang Q."/>
        </authorList>
    </citation>
    <scope>X-RAY CRYSTALLOGRAPHY (2.40 ANGSTROMS) OF 19-381 IN COMPLEX WITH ZINC</scope>
    <scope>FUNCTION</scope>
    <scope>CATALYTIC ACTIVITY</scope>
    <scope>BIOPHYSICOCHEMICAL PROPERTIES</scope>
    <scope>DISULFIDE BONDS</scope>
    <scope>GLYCOSYLATION AT ASN-171</scope>
    <scope>MUTAGENESIS OF GLN-125 AND SER-241</scope>
</reference>
<name>CDA8_BOMMO</name>
<feature type="signal peptide" evidence="1">
    <location>
        <begin position="1"/>
        <end position="18"/>
    </location>
</feature>
<feature type="chain" id="PRO_5003621761" description="Chitin deacetylase 8" evidence="1">
    <location>
        <begin position="19"/>
        <end position="381"/>
    </location>
</feature>
<feature type="binding site" evidence="2 10">
    <location>
        <position position="63"/>
    </location>
    <ligand>
        <name>Zn(2+)</name>
        <dbReference type="ChEBI" id="CHEBI:29105"/>
    </ligand>
</feature>
<feature type="binding site" evidence="2 10">
    <location>
        <position position="117"/>
    </location>
    <ligand>
        <name>Zn(2+)</name>
        <dbReference type="ChEBI" id="CHEBI:29105"/>
    </ligand>
</feature>
<feature type="binding site" evidence="2 10">
    <location>
        <position position="121"/>
    </location>
    <ligand>
        <name>Zn(2+)</name>
        <dbReference type="ChEBI" id="CHEBI:29105"/>
    </ligand>
</feature>
<feature type="glycosylation site" description="N-linked (GlcNAc...) asparagine" evidence="2 10">
    <location>
        <position position="171"/>
    </location>
</feature>
<feature type="disulfide bond" evidence="2 10">
    <location>
        <begin position="27"/>
        <end position="39"/>
    </location>
</feature>
<feature type="disulfide bond" evidence="2 10">
    <location>
        <begin position="32"/>
        <end position="37"/>
    </location>
</feature>
<feature type="disulfide bond" evidence="2 10">
    <location>
        <begin position="86"/>
        <end position="335"/>
    </location>
</feature>
<feature type="disulfide bond" evidence="2 10">
    <location>
        <begin position="211"/>
        <end position="216"/>
    </location>
</feature>
<feature type="disulfide bond" evidence="2 10">
    <location>
        <begin position="240"/>
        <end position="246"/>
    </location>
</feature>
<feature type="disulfide bond" evidence="2 10">
    <location>
        <begin position="343"/>
        <end position="365"/>
    </location>
</feature>
<feature type="disulfide bond" evidence="2 10">
    <location>
        <begin position="348"/>
        <end position="368"/>
    </location>
</feature>
<feature type="mutagenesis site" description="Moderately impairs specific activity." evidence="2">
    <original>Q</original>
    <variation>A</variation>
    <location>
        <position position="125"/>
    </location>
</feature>
<feature type="mutagenesis site" description="Significantly impairs specific activity." evidence="2">
    <original>S</original>
    <variation>A</variation>
    <location>
        <position position="241"/>
    </location>
</feature>
<organism evidence="9">
    <name type="scientific">Bombyx mori</name>
    <name type="common">Silk moth</name>
    <dbReference type="NCBI Taxonomy" id="7091"/>
    <lineage>
        <taxon>Eukaryota</taxon>
        <taxon>Metazoa</taxon>
        <taxon>Ecdysozoa</taxon>
        <taxon>Arthropoda</taxon>
        <taxon>Hexapoda</taxon>
        <taxon>Insecta</taxon>
        <taxon>Pterygota</taxon>
        <taxon>Neoptera</taxon>
        <taxon>Endopterygota</taxon>
        <taxon>Lepidoptera</taxon>
        <taxon>Glossata</taxon>
        <taxon>Ditrysia</taxon>
        <taxon>Bombycoidea</taxon>
        <taxon>Bombycidae</taxon>
        <taxon>Bombycinae</taxon>
        <taxon>Bombyx</taxon>
    </lineage>
</organism>
<proteinExistence type="evidence at protein level"/>
<keyword id="KW-0002">3D-structure</keyword>
<keyword id="KW-0119">Carbohydrate metabolism</keyword>
<keyword id="KW-0146">Chitin degradation</keyword>
<keyword id="KW-1015">Disulfide bond</keyword>
<keyword id="KW-0325">Glycoprotein</keyword>
<keyword id="KW-0378">Hydrolase</keyword>
<keyword id="KW-0479">Metal-binding</keyword>
<keyword id="KW-0624">Polysaccharide degradation</keyword>
<keyword id="KW-1185">Reference proteome</keyword>
<keyword id="KW-0964">Secreted</keyword>
<keyword id="KW-0732">Signal</keyword>
<keyword id="KW-0862">Zinc</keyword>
<protein>
    <recommendedName>
        <fullName evidence="4">Chitin deacetylase 8</fullName>
        <shortName evidence="4">BmCDA8</shortName>
        <ecNumber evidence="2">3.5.1.41</ecNumber>
    </recommendedName>
    <alternativeName>
        <fullName evidence="8">Chitin deacetylase 17</fullName>
    </alternativeName>
</protein>
<evidence type="ECO:0000255" key="1"/>
<evidence type="ECO:0000269" key="2">
    <source>
    </source>
</evidence>
<evidence type="ECO:0000269" key="3">
    <source>
    </source>
</evidence>
<evidence type="ECO:0000303" key="4">
    <source>
    </source>
</evidence>
<evidence type="ECO:0000305" key="5"/>
<evidence type="ECO:0000305" key="6">
    <source>
    </source>
</evidence>
<evidence type="ECO:0000312" key="7">
    <source>
        <dbReference type="EMBL" id="AK378243"/>
    </source>
</evidence>
<evidence type="ECO:0000312" key="8">
    <source>
        <dbReference type="EMBL" id="AKD49099.1"/>
    </source>
</evidence>
<evidence type="ECO:0000312" key="9">
    <source>
        <dbReference type="Proteomes" id="UP000005204"/>
    </source>
</evidence>
<evidence type="ECO:0007744" key="10">
    <source>
        <dbReference type="PDB" id="5Z34"/>
    </source>
</evidence>
<dbReference type="EC" id="3.5.1.41" evidence="2"/>
<dbReference type="EMBL" id="AK378243">
    <property type="status" value="NOT_ANNOTATED_CDS"/>
    <property type="molecule type" value="mRNA"/>
</dbReference>
<dbReference type="EMBL" id="BABH01025382">
    <property type="status" value="NOT_ANNOTATED_CDS"/>
    <property type="molecule type" value="Genomic_DNA"/>
</dbReference>
<dbReference type="EMBL" id="KP744648">
    <property type="protein sequence ID" value="AKD49099.1"/>
    <property type="molecule type" value="mRNA"/>
</dbReference>
<dbReference type="PDB" id="5Z34">
    <property type="method" value="X-ray"/>
    <property type="resolution" value="2.40 A"/>
    <property type="chains" value="A=19-381"/>
</dbReference>
<dbReference type="PDBsum" id="5Z34"/>
<dbReference type="SMR" id="H9JW43"/>
<dbReference type="STRING" id="7091.H9JW43"/>
<dbReference type="GlyCosmos" id="H9JW43">
    <property type="glycosylation" value="1 site, No reported glycans"/>
</dbReference>
<dbReference type="iPTMnet" id="H9JW43"/>
<dbReference type="PaxDb" id="7091-BGIBMGA013756-TA"/>
<dbReference type="EnsemblMetazoa" id="XM_004923398.4">
    <property type="protein sequence ID" value="XP_004923455.1"/>
    <property type="gene ID" value="LOC101735686"/>
</dbReference>
<dbReference type="GeneID" id="101735686"/>
<dbReference type="KEGG" id="bmor:101735686"/>
<dbReference type="eggNOG" id="ENOG502R90A">
    <property type="taxonomic scope" value="Eukaryota"/>
</dbReference>
<dbReference type="HOGENOM" id="CLU_022576_0_0_1"/>
<dbReference type="InParanoid" id="H9JW43"/>
<dbReference type="OrthoDB" id="178682at7088"/>
<dbReference type="BRENDA" id="3.5.1.41">
    <property type="organism ID" value="890"/>
</dbReference>
<dbReference type="Proteomes" id="UP000005204">
    <property type="component" value="Unassembled WGS sequence"/>
</dbReference>
<dbReference type="GO" id="GO:0005615">
    <property type="term" value="C:extracellular space"/>
    <property type="evidence" value="ECO:0000305"/>
    <property type="project" value="UniProtKB"/>
</dbReference>
<dbReference type="GO" id="GO:0004099">
    <property type="term" value="F:chitin deacetylase activity"/>
    <property type="evidence" value="ECO:0000314"/>
    <property type="project" value="UniProtKB"/>
</dbReference>
<dbReference type="GO" id="GO:0008270">
    <property type="term" value="F:zinc ion binding"/>
    <property type="evidence" value="ECO:0000314"/>
    <property type="project" value="UniProtKB"/>
</dbReference>
<dbReference type="GO" id="GO:0006032">
    <property type="term" value="P:chitin catabolic process"/>
    <property type="evidence" value="ECO:0007669"/>
    <property type="project" value="UniProtKB-KW"/>
</dbReference>
<dbReference type="GO" id="GO:0000272">
    <property type="term" value="P:polysaccharide catabolic process"/>
    <property type="evidence" value="ECO:0000314"/>
    <property type="project" value="UniProtKB"/>
</dbReference>
<dbReference type="CDD" id="cd10975">
    <property type="entry name" value="CE4_CDA_like_2"/>
    <property type="match status" value="1"/>
</dbReference>
<dbReference type="Gene3D" id="3.20.20.370">
    <property type="entry name" value="Glycoside hydrolase/deacetylase"/>
    <property type="match status" value="1"/>
</dbReference>
<dbReference type="InterPro" id="IPR052740">
    <property type="entry name" value="CE4"/>
</dbReference>
<dbReference type="InterPro" id="IPR011330">
    <property type="entry name" value="Glyco_hydro/deAcase_b/a-brl"/>
</dbReference>
<dbReference type="InterPro" id="IPR002509">
    <property type="entry name" value="NODB_dom"/>
</dbReference>
<dbReference type="PANTHER" id="PTHR45985">
    <property type="match status" value="1"/>
</dbReference>
<dbReference type="PANTHER" id="PTHR45985:SF8">
    <property type="entry name" value="CHITIN DEACETYLASE-LIKE 9, ISOFORM A"/>
    <property type="match status" value="1"/>
</dbReference>
<dbReference type="Pfam" id="PF01522">
    <property type="entry name" value="Polysacc_deac_1"/>
    <property type="match status" value="1"/>
</dbReference>
<dbReference type="SUPFAM" id="SSF88713">
    <property type="entry name" value="Glycoside hydrolase/deacetylase"/>
    <property type="match status" value="1"/>
</dbReference>
<gene>
    <name evidence="4" type="primary">CDA8</name>
</gene>
<sequence>MKRLSVLCSLLLVAAALGTELPLATPCDEEACKLPDCRCSSTNIPGGLRARDTPQFVTVTFDDGINVINIETYREVLYGRSNSNRCPAGATFYVSHEYTNYQLVNELYNRGFEIALHSISHRTPQAFWADATYQNLVQEIGDQKRQMAHFASIPASAIKGVRIPFLQMSGNTSFQVMADFDLLYDCTWPTTALTNPGLWPYTLHHESIQDCIIPPCPTASIPGPWVLPMISWRDLNNFPCSMVDGCFFTPDRTDEEGWFKFILTNFERHYLGNRAPFGFFVHEWFISSNPAIKRAFVRFMDIINNLNDVFMVNSAEVIDWVKNPVPIDRYRQQQCKFTMPSICRPSFCGPLTGTHNQLSYYMTICNTCPRNYPWVGNPLGQ</sequence>
<accession>H9JW43</accession>
<accession>A0A0F6T2X6</accession>
<comment type="function">
    <text evidence="2">Hydrolyzes the N-acetamido groups of N-acetyl-D-glucosamine (GlcNAc) residues in chitin. Shows activity towards the chitinous oligomers GlcNAc(3), GlcNAc(4), GlcNAc(5) and GlcNAc(6), but not GlcNAc or GlcNAc(2). Requires the substrate to occupy subsites 0, +1, and +2 for optimum catalysis.</text>
</comment>
<comment type="catalytic activity">
    <reaction evidence="2">
        <text>[(1-&gt;4)-N-acetyl-beta-D-glucosaminyl](n) + n H2O = chitosan + n acetate</text>
        <dbReference type="Rhea" id="RHEA:10464"/>
        <dbReference type="Rhea" id="RHEA-COMP:9593"/>
        <dbReference type="Rhea" id="RHEA-COMP:9597"/>
        <dbReference type="ChEBI" id="CHEBI:15377"/>
        <dbReference type="ChEBI" id="CHEBI:17029"/>
        <dbReference type="ChEBI" id="CHEBI:30089"/>
        <dbReference type="ChEBI" id="CHEBI:57704"/>
        <dbReference type="EC" id="3.5.1.41"/>
    </reaction>
</comment>
<comment type="cofactor">
    <cofactor evidence="6">
        <name>Zn(2+)</name>
        <dbReference type="ChEBI" id="CHEBI:29105"/>
    </cofactor>
</comment>
<comment type="biophysicochemical properties">
    <kinetics>
        <KM evidence="2">76.7 mM for GlcNAc(3)</KM>
        <KM evidence="2">12.3 mM for GlcNAc(4)</KM>
        <KM evidence="2">15.7 mM for GlcNAc(5)</KM>
        <KM evidence="2">9.2 mM for GlcNAc(6)</KM>
        <KM evidence="2">1.926 mg/ml for ethylene glycol chitin</KM>
        <KM evidence="2">1.599 mg/ml for colloidal chitin</KM>
        <text evidence="2">kcat is 7.62 min(-1) for GlcNAc(3) (PubMed:30755482). kcat is 5.59 min(-1) for GlcNAc(4) (PubMed:30755482). kcat is 7.52 min(-1) for GlcNAc(5) (PubMed:30755482). kcat is 9.07 min(-1) for GlcNAc(6) (PubMed:30755482). kcat is 0.097 min(-1) for ethylene glycol chitin (PubMed:30755482). kcat is 0.012 min(-1) for colloidal chitin (PubMed:30755482).</text>
    </kinetics>
</comment>
<comment type="subcellular location">
    <subcellularLocation>
        <location evidence="5">Secreted</location>
    </subcellularLocation>
</comment>
<comment type="tissue specificity">
    <text evidence="3">Strongly expressed in the midgut. Has little or no expression in other tissues tested.</text>
</comment>
<comment type="developmental stage">
    <text evidence="3">Expressed during the 5th larval instar (feeding) stage with a strong peak of expression in newly-molted larvae, and progressively lower peaks of expression at day 3 and day 7 of the 5th instar. No expression detected during the pupal stage.</text>
</comment>
<comment type="induction">
    <text evidence="3">Strongly down-regulated in response to 20-hydroxyecdysone (20E). Up-regulated in response to juvenile hormone analog.</text>
</comment>
<comment type="similarity">
    <text evidence="5">Belongs to the carbohydrate esterase 4 (CE4) family.</text>
</comment>